<evidence type="ECO:0000305" key="1"/>
<accession>P0A4Q8</accession>
<accession>P33382</accession>
<accession>Q8VMZ2</accession>
<gene>
    <name type="ordered locus">lmo0208</name>
</gene>
<keyword id="KW-1185">Reference proteome</keyword>
<protein>
    <recommendedName>
        <fullName>UPF0145 protein lmo0208</fullName>
    </recommendedName>
</protein>
<dbReference type="EMBL" id="M82881">
    <property type="protein sequence ID" value="AAA25272.1"/>
    <property type="molecule type" value="Genomic_DNA"/>
</dbReference>
<dbReference type="EMBL" id="AL591974">
    <property type="protein sequence ID" value="CAD00735.1"/>
    <property type="molecule type" value="Genomic_DNA"/>
</dbReference>
<dbReference type="PIR" id="AI1100">
    <property type="entry name" value="AI1100"/>
</dbReference>
<dbReference type="PIR" id="I43868">
    <property type="entry name" value="I43868"/>
</dbReference>
<dbReference type="RefSeq" id="NP_463739.1">
    <property type="nucleotide sequence ID" value="NC_003210.1"/>
</dbReference>
<dbReference type="RefSeq" id="WP_003725735.1">
    <property type="nucleotide sequence ID" value="NZ_CP149495.1"/>
</dbReference>
<dbReference type="SMR" id="P0A4Q8"/>
<dbReference type="STRING" id="169963.gene:17592844"/>
<dbReference type="PaxDb" id="169963-lmo0208"/>
<dbReference type="EnsemblBacteria" id="CAD00735">
    <property type="protein sequence ID" value="CAD00735"/>
    <property type="gene ID" value="CAD00735"/>
</dbReference>
<dbReference type="GeneID" id="987041"/>
<dbReference type="KEGG" id="lmo:lmo0208"/>
<dbReference type="PATRIC" id="fig|169963.11.peg.213"/>
<dbReference type="eggNOG" id="COG0393">
    <property type="taxonomic scope" value="Bacteria"/>
</dbReference>
<dbReference type="HOGENOM" id="CLU_117144_3_1_9"/>
<dbReference type="OrthoDB" id="9796448at2"/>
<dbReference type="PhylomeDB" id="P0A4Q8"/>
<dbReference type="BioCyc" id="LMON169963:LMO0208-MONOMER"/>
<dbReference type="Proteomes" id="UP000000817">
    <property type="component" value="Chromosome"/>
</dbReference>
<dbReference type="Gene3D" id="3.30.110.70">
    <property type="entry name" value="Hypothetical protein apc22750. Chain B"/>
    <property type="match status" value="1"/>
</dbReference>
<dbReference type="HAMAP" id="MF_00338">
    <property type="entry name" value="UPF0145"/>
    <property type="match status" value="1"/>
</dbReference>
<dbReference type="InterPro" id="IPR035439">
    <property type="entry name" value="UPF0145_dom_sf"/>
</dbReference>
<dbReference type="InterPro" id="IPR002765">
    <property type="entry name" value="UPF0145_YbjQ-like"/>
</dbReference>
<dbReference type="NCBIfam" id="NF002224">
    <property type="entry name" value="PRK01119.1"/>
    <property type="match status" value="1"/>
</dbReference>
<dbReference type="PANTHER" id="PTHR34068">
    <property type="entry name" value="UPF0145 PROTEIN YBJQ"/>
    <property type="match status" value="1"/>
</dbReference>
<dbReference type="PANTHER" id="PTHR34068:SF1">
    <property type="entry name" value="UPF0145 PROTEIN YBJQ"/>
    <property type="match status" value="1"/>
</dbReference>
<dbReference type="Pfam" id="PF01906">
    <property type="entry name" value="YbjQ_1"/>
    <property type="match status" value="1"/>
</dbReference>
<dbReference type="SUPFAM" id="SSF117782">
    <property type="entry name" value="YbjQ-like"/>
    <property type="match status" value="1"/>
</dbReference>
<sequence length="110" mass="11992">MIVTTSPNIEGKQIIEYKKIVFGEVITGVNFMKDIGAGLRNFFGGRSQGYEDELINAREEAIREMEQRAKDIGANAVIGVDIDYEVLGADNGMLMVTASGTAVVIEAQDY</sequence>
<name>Y208_LISMO</name>
<comment type="similarity">
    <text evidence="1">Belongs to the UPF0145 family.</text>
</comment>
<reference key="1">
    <citation type="journal article" date="1992" name="Infect. Immun.">
        <title>Nucleotide sequence of the lecithinase operon of Listeria monocytogenes and possible role of lecithinase in cell-to-cell spread.</title>
        <authorList>
            <person name="Vazquez-Boland J.-A."/>
            <person name="Kocks C."/>
            <person name="Dramsi S."/>
            <person name="Ohayon H."/>
            <person name="Geoffroy C."/>
            <person name="Mengaud J."/>
            <person name="Cossart P."/>
        </authorList>
    </citation>
    <scope>NUCLEOTIDE SEQUENCE [GENOMIC DNA]</scope>
    <source>
        <strain>LO28 / Serovar 1/2c</strain>
    </source>
</reference>
<reference key="2">
    <citation type="journal article" date="2001" name="Science">
        <title>Comparative genomics of Listeria species.</title>
        <authorList>
            <person name="Glaser P."/>
            <person name="Frangeul L."/>
            <person name="Buchrieser C."/>
            <person name="Rusniok C."/>
            <person name="Amend A."/>
            <person name="Baquero F."/>
            <person name="Berche P."/>
            <person name="Bloecker H."/>
            <person name="Brandt P."/>
            <person name="Chakraborty T."/>
            <person name="Charbit A."/>
            <person name="Chetouani F."/>
            <person name="Couve E."/>
            <person name="de Daruvar A."/>
            <person name="Dehoux P."/>
            <person name="Domann E."/>
            <person name="Dominguez-Bernal G."/>
            <person name="Duchaud E."/>
            <person name="Durant L."/>
            <person name="Dussurget O."/>
            <person name="Entian K.-D."/>
            <person name="Fsihi H."/>
            <person name="Garcia-del Portillo F."/>
            <person name="Garrido P."/>
            <person name="Gautier L."/>
            <person name="Goebel W."/>
            <person name="Gomez-Lopez N."/>
            <person name="Hain T."/>
            <person name="Hauf J."/>
            <person name="Jackson D."/>
            <person name="Jones L.-M."/>
            <person name="Kaerst U."/>
            <person name="Kreft J."/>
            <person name="Kuhn M."/>
            <person name="Kunst F."/>
            <person name="Kurapkat G."/>
            <person name="Madueno E."/>
            <person name="Maitournam A."/>
            <person name="Mata Vicente J."/>
            <person name="Ng E."/>
            <person name="Nedjari H."/>
            <person name="Nordsiek G."/>
            <person name="Novella S."/>
            <person name="de Pablos B."/>
            <person name="Perez-Diaz J.-C."/>
            <person name="Purcell R."/>
            <person name="Remmel B."/>
            <person name="Rose M."/>
            <person name="Schlueter T."/>
            <person name="Simoes N."/>
            <person name="Tierrez A."/>
            <person name="Vazquez-Boland J.-A."/>
            <person name="Voss H."/>
            <person name="Wehland J."/>
            <person name="Cossart P."/>
        </authorList>
    </citation>
    <scope>NUCLEOTIDE SEQUENCE [LARGE SCALE GENOMIC DNA]</scope>
    <source>
        <strain>ATCC BAA-679 / EGD-e</strain>
    </source>
</reference>
<feature type="chain" id="PRO_0000138475" description="UPF0145 protein lmo0208">
    <location>
        <begin position="1"/>
        <end position="110"/>
    </location>
</feature>
<proteinExistence type="inferred from homology"/>
<organism>
    <name type="scientific">Listeria monocytogenes serovar 1/2a (strain ATCC BAA-679 / EGD-e)</name>
    <dbReference type="NCBI Taxonomy" id="169963"/>
    <lineage>
        <taxon>Bacteria</taxon>
        <taxon>Bacillati</taxon>
        <taxon>Bacillota</taxon>
        <taxon>Bacilli</taxon>
        <taxon>Bacillales</taxon>
        <taxon>Listeriaceae</taxon>
        <taxon>Listeria</taxon>
    </lineage>
</organism>